<dbReference type="EMBL" id="AF261072">
    <property type="protein sequence ID" value="AAM20739.1"/>
    <property type="molecule type" value="mRNA"/>
</dbReference>
<dbReference type="EMBL" id="AJ617479">
    <property type="protein sequence ID" value="CAE84581.1"/>
    <property type="status" value="ALT_SEQ"/>
    <property type="molecule type" value="mRNA"/>
</dbReference>
<dbReference type="EMBL" id="AY533507">
    <property type="protein sequence ID" value="AAS45401.1"/>
    <property type="status" value="ALT_SEQ"/>
    <property type="molecule type" value="mRNA"/>
</dbReference>
<dbReference type="EMBL" id="AL136746">
    <property type="protein sequence ID" value="CAB66680.1"/>
    <property type="status" value="ALT_SEQ"/>
    <property type="molecule type" value="mRNA"/>
</dbReference>
<dbReference type="EMBL" id="EU392500">
    <property type="protein sequence ID" value="ACB88862.1"/>
    <property type="molecule type" value="mRNA"/>
</dbReference>
<dbReference type="EMBL" id="AK289460">
    <property type="protein sequence ID" value="BAF82149.1"/>
    <property type="molecule type" value="mRNA"/>
</dbReference>
<dbReference type="EMBL" id="AC006942">
    <property type="protein sequence ID" value="AAD15565.1"/>
    <property type="molecule type" value="Genomic_DNA"/>
</dbReference>
<dbReference type="EMBL" id="AC018766">
    <property type="status" value="NOT_ANNOTATED_CDS"/>
    <property type="molecule type" value="Genomic_DNA"/>
</dbReference>
<dbReference type="EMBL" id="CH471177">
    <property type="protein sequence ID" value="EAW52546.1"/>
    <property type="molecule type" value="Genomic_DNA"/>
</dbReference>
<dbReference type="EMBL" id="BC024312">
    <property type="protein sequence ID" value="AAH24312.2"/>
    <property type="molecule type" value="mRNA"/>
</dbReference>
<dbReference type="EMBL" id="BC065297">
    <property type="protein sequence ID" value="AAH65297.1"/>
    <property type="molecule type" value="mRNA"/>
</dbReference>
<dbReference type="EMBL" id="AF283769">
    <property type="protein sequence ID" value="AAG15589.2"/>
    <property type="status" value="ALT_INIT"/>
    <property type="molecule type" value="mRNA"/>
</dbReference>
<dbReference type="CCDS" id="CCDS33075.1">
    <molecule id="Q71SY5-1"/>
</dbReference>
<dbReference type="RefSeq" id="NP_112235.2">
    <molecule id="Q71SY5-1"/>
    <property type="nucleotide sequence ID" value="NM_030973.4"/>
</dbReference>
<dbReference type="PDB" id="2KY6">
    <property type="method" value="NMR"/>
    <property type="chains" value="A=391-553"/>
</dbReference>
<dbReference type="PDB" id="2L23">
    <property type="method" value="NMR"/>
    <property type="chains" value="A=391-548"/>
</dbReference>
<dbReference type="PDB" id="2L6U">
    <property type="method" value="NMR"/>
    <property type="chains" value="A=391-543"/>
</dbReference>
<dbReference type="PDB" id="2XNF">
    <property type="method" value="NMR"/>
    <property type="chains" value="A=394-543"/>
</dbReference>
<dbReference type="PDB" id="7EMF">
    <property type="method" value="EM"/>
    <property type="resolution" value="3.50 A"/>
    <property type="chains" value="Y=1-747"/>
</dbReference>
<dbReference type="PDB" id="7LBM">
    <property type="method" value="EM"/>
    <property type="resolution" value="4.80 A"/>
    <property type="chains" value="3=1-747"/>
</dbReference>
<dbReference type="PDB" id="8GXQ">
    <property type="method" value="EM"/>
    <property type="resolution" value="5.04 A"/>
    <property type="chains" value="y=1-747"/>
</dbReference>
<dbReference type="PDB" id="8GXS">
    <property type="method" value="EM"/>
    <property type="resolution" value="4.16 A"/>
    <property type="chains" value="y=1-747"/>
</dbReference>
<dbReference type="PDB" id="8T9D">
    <property type="method" value="EM"/>
    <property type="resolution" value="4.66 A"/>
    <property type="chains" value="T=1-747"/>
</dbReference>
<dbReference type="PDBsum" id="2KY6"/>
<dbReference type="PDBsum" id="2L23"/>
<dbReference type="PDBsum" id="2L6U"/>
<dbReference type="PDBsum" id="2XNF"/>
<dbReference type="PDBsum" id="7EMF"/>
<dbReference type="PDBsum" id="7LBM"/>
<dbReference type="PDBsum" id="8GXQ"/>
<dbReference type="PDBsum" id="8GXS"/>
<dbReference type="PDBsum" id="8T9D"/>
<dbReference type="BMRB" id="Q71SY5"/>
<dbReference type="EMDB" id="EMD-23255"/>
<dbReference type="EMDB" id="EMD-31191"/>
<dbReference type="EMDB" id="EMD-34359"/>
<dbReference type="EMDB" id="EMD-34360"/>
<dbReference type="EMDB" id="EMD-41107"/>
<dbReference type="SMR" id="Q71SY5"/>
<dbReference type="BioGRID" id="123607">
    <property type="interactions" value="95"/>
</dbReference>
<dbReference type="ComplexPortal" id="CPX-3227">
    <property type="entry name" value="Core mediator complex"/>
</dbReference>
<dbReference type="CORUM" id="Q71SY5"/>
<dbReference type="DIP" id="DIP-31454N"/>
<dbReference type="FunCoup" id="Q71SY5">
    <property type="interactions" value="2042"/>
</dbReference>
<dbReference type="IntAct" id="Q71SY5">
    <property type="interactions" value="82"/>
</dbReference>
<dbReference type="MINT" id="Q71SY5"/>
<dbReference type="STRING" id="9606.ENSP00000326767"/>
<dbReference type="BindingDB" id="Q71SY5"/>
<dbReference type="ChEMBL" id="CHEMBL5169169"/>
<dbReference type="GlyGen" id="Q71SY5">
    <property type="glycosylation" value="1 site, 1 O-linked glycan (1 site)"/>
</dbReference>
<dbReference type="iPTMnet" id="Q71SY5"/>
<dbReference type="PhosphoSitePlus" id="Q71SY5"/>
<dbReference type="BioMuta" id="MED25"/>
<dbReference type="DMDM" id="158706143"/>
<dbReference type="jPOST" id="Q71SY5"/>
<dbReference type="MassIVE" id="Q71SY5"/>
<dbReference type="PaxDb" id="9606-ENSP00000326767"/>
<dbReference type="PeptideAtlas" id="Q71SY5"/>
<dbReference type="ProteomicsDB" id="68625">
    <molecule id="Q71SY5-1"/>
</dbReference>
<dbReference type="ProteomicsDB" id="68628">
    <molecule id="Q71SY5-4"/>
</dbReference>
<dbReference type="ProteomicsDB" id="68629">
    <molecule id="Q71SY5-5"/>
</dbReference>
<dbReference type="ProteomicsDB" id="7538"/>
<dbReference type="Pumba" id="Q71SY5"/>
<dbReference type="Antibodypedia" id="45928">
    <property type="antibodies" value="115 antibodies from 21 providers"/>
</dbReference>
<dbReference type="DNASU" id="81857"/>
<dbReference type="Ensembl" id="ENST00000312865.10">
    <molecule id="Q71SY5-1"/>
    <property type="protein sequence ID" value="ENSP00000326767.5"/>
    <property type="gene ID" value="ENSG00000104973.19"/>
</dbReference>
<dbReference type="Ensembl" id="ENST00000538643.5">
    <molecule id="Q71SY5-6"/>
    <property type="protein sequence ID" value="ENSP00000437496.1"/>
    <property type="gene ID" value="ENSG00000104973.19"/>
</dbReference>
<dbReference type="GeneID" id="81857"/>
<dbReference type="KEGG" id="hsa:81857"/>
<dbReference type="MANE-Select" id="ENST00000312865.10">
    <property type="protein sequence ID" value="ENSP00000326767.5"/>
    <property type="RefSeq nucleotide sequence ID" value="NM_030973.4"/>
    <property type="RefSeq protein sequence ID" value="NP_112235.2"/>
</dbReference>
<dbReference type="UCSC" id="uc002ppw.3">
    <molecule id="Q71SY5-1"/>
    <property type="organism name" value="human"/>
</dbReference>
<dbReference type="AGR" id="HGNC:28845"/>
<dbReference type="CTD" id="81857"/>
<dbReference type="DisGeNET" id="81857"/>
<dbReference type="GeneCards" id="MED25"/>
<dbReference type="GeneReviews" id="MED25"/>
<dbReference type="HGNC" id="HGNC:28845">
    <property type="gene designation" value="MED25"/>
</dbReference>
<dbReference type="HPA" id="ENSG00000104973">
    <property type="expression patterns" value="Low tissue specificity"/>
</dbReference>
<dbReference type="MalaCards" id="MED25"/>
<dbReference type="MIM" id="605589">
    <property type="type" value="phenotype"/>
</dbReference>
<dbReference type="MIM" id="610197">
    <property type="type" value="gene"/>
</dbReference>
<dbReference type="MIM" id="616449">
    <property type="type" value="phenotype"/>
</dbReference>
<dbReference type="neXtProt" id="NX_Q71SY5"/>
<dbReference type="OpenTargets" id="ENSG00000104973"/>
<dbReference type="Orphanet" id="88616">
    <property type="disease" value="Autosomal recessive non-syndromic intellectual disability"/>
</dbReference>
<dbReference type="Orphanet" id="464738">
    <property type="disease" value="Basel-Vanagaite-Smirin-Yosef syndrome"/>
</dbReference>
<dbReference type="PharmGKB" id="PA134984839"/>
<dbReference type="VEuPathDB" id="HostDB:ENSG00000104973"/>
<dbReference type="eggNOG" id="ENOG502QRN5">
    <property type="taxonomic scope" value="Eukaryota"/>
</dbReference>
<dbReference type="GeneTree" id="ENSGT00940000160439"/>
<dbReference type="HOGENOM" id="CLU_007594_0_0_1"/>
<dbReference type="InParanoid" id="Q71SY5"/>
<dbReference type="OMA" id="NDQQKIP"/>
<dbReference type="OrthoDB" id="7690434at2759"/>
<dbReference type="PAN-GO" id="Q71SY5">
    <property type="GO annotations" value="3 GO annotations based on evolutionary models"/>
</dbReference>
<dbReference type="PhylomeDB" id="Q71SY5"/>
<dbReference type="TreeFam" id="TF329598"/>
<dbReference type="PathwayCommons" id="Q71SY5"/>
<dbReference type="Reactome" id="R-HSA-1989781">
    <property type="pathway name" value="PPARA activates gene expression"/>
</dbReference>
<dbReference type="Reactome" id="R-HSA-212436">
    <property type="pathway name" value="Generic Transcription Pathway"/>
</dbReference>
<dbReference type="Reactome" id="R-HSA-381340">
    <property type="pathway name" value="Transcriptional regulation of white adipocyte differentiation"/>
</dbReference>
<dbReference type="Reactome" id="R-HSA-9833110">
    <property type="pathway name" value="RSV-host interactions"/>
</dbReference>
<dbReference type="SignaLink" id="Q71SY5"/>
<dbReference type="SIGNOR" id="Q71SY5"/>
<dbReference type="BioGRID-ORCS" id="81857">
    <property type="hits" value="175 hits in 1159 CRISPR screens"/>
</dbReference>
<dbReference type="ChiTaRS" id="MED25">
    <property type="organism name" value="human"/>
</dbReference>
<dbReference type="EvolutionaryTrace" id="Q71SY5"/>
<dbReference type="GeneWiki" id="MED25"/>
<dbReference type="GenomeRNAi" id="81857"/>
<dbReference type="Pharos" id="Q71SY5">
    <property type="development level" value="Tbio"/>
</dbReference>
<dbReference type="PRO" id="PR:Q71SY5"/>
<dbReference type="Proteomes" id="UP000005640">
    <property type="component" value="Chromosome 19"/>
</dbReference>
<dbReference type="RNAct" id="Q71SY5">
    <property type="molecule type" value="protein"/>
</dbReference>
<dbReference type="Bgee" id="ENSG00000104973">
    <property type="expression patterns" value="Expressed in oocyte and 185 other cell types or tissues"/>
</dbReference>
<dbReference type="ExpressionAtlas" id="Q71SY5">
    <property type="expression patterns" value="baseline and differential"/>
</dbReference>
<dbReference type="GO" id="GO:0070847">
    <property type="term" value="C:core mediator complex"/>
    <property type="evidence" value="ECO:0000353"/>
    <property type="project" value="ComplexPortal"/>
</dbReference>
<dbReference type="GO" id="GO:0016592">
    <property type="term" value="C:mediator complex"/>
    <property type="evidence" value="ECO:0000318"/>
    <property type="project" value="GO_Central"/>
</dbReference>
<dbReference type="GO" id="GO:0005654">
    <property type="term" value="C:nucleoplasm"/>
    <property type="evidence" value="ECO:0000314"/>
    <property type="project" value="HPA"/>
</dbReference>
<dbReference type="GO" id="GO:0005634">
    <property type="term" value="C:nucleus"/>
    <property type="evidence" value="ECO:0000314"/>
    <property type="project" value="ComplexPortal"/>
</dbReference>
<dbReference type="GO" id="GO:0005667">
    <property type="term" value="C:transcription regulator complex"/>
    <property type="evidence" value="ECO:0000318"/>
    <property type="project" value="GO_Central"/>
</dbReference>
<dbReference type="GO" id="GO:0042974">
    <property type="term" value="F:nuclear retinoic acid receptor binding"/>
    <property type="evidence" value="ECO:0000353"/>
    <property type="project" value="UniProtKB"/>
</dbReference>
<dbReference type="GO" id="GO:0046965">
    <property type="term" value="F:nuclear retinoid X receptor binding"/>
    <property type="evidence" value="ECO:0000353"/>
    <property type="project" value="UniProtKB"/>
</dbReference>
<dbReference type="GO" id="GO:0001223">
    <property type="term" value="F:transcription coactivator binding"/>
    <property type="evidence" value="ECO:0000353"/>
    <property type="project" value="UniProtKB"/>
</dbReference>
<dbReference type="GO" id="GO:0048147">
    <property type="term" value="P:negative regulation of fibroblast proliferation"/>
    <property type="evidence" value="ECO:0000315"/>
    <property type="project" value="UniProtKB"/>
</dbReference>
<dbReference type="GO" id="GO:0000122">
    <property type="term" value="P:negative regulation of transcription by RNA polymerase II"/>
    <property type="evidence" value="ECO:0000315"/>
    <property type="project" value="UniProtKB"/>
</dbReference>
<dbReference type="GO" id="GO:0035563">
    <property type="term" value="P:positive regulation of chromatin binding"/>
    <property type="evidence" value="ECO:0000315"/>
    <property type="project" value="UniProtKB"/>
</dbReference>
<dbReference type="GO" id="GO:2001178">
    <property type="term" value="P:positive regulation of mediator complex assembly"/>
    <property type="evidence" value="ECO:0000315"/>
    <property type="project" value="UniProtKB"/>
</dbReference>
<dbReference type="GO" id="GO:0045944">
    <property type="term" value="P:positive regulation of transcription by RNA polymerase II"/>
    <property type="evidence" value="ECO:0000314"/>
    <property type="project" value="UniProtKB"/>
</dbReference>
<dbReference type="GO" id="GO:0032968">
    <property type="term" value="P:positive regulation of transcription elongation by RNA polymerase II"/>
    <property type="evidence" value="ECO:0000303"/>
    <property type="project" value="ComplexPortal"/>
</dbReference>
<dbReference type="GO" id="GO:0060261">
    <property type="term" value="P:positive regulation of transcription initiation by RNA polymerase II"/>
    <property type="evidence" value="ECO:0000303"/>
    <property type="project" value="ComplexPortal"/>
</dbReference>
<dbReference type="GO" id="GO:0051123">
    <property type="term" value="P:RNA polymerase II preinitiation complex assembly"/>
    <property type="evidence" value="ECO:0000303"/>
    <property type="project" value="ComplexPortal"/>
</dbReference>
<dbReference type="FunFam" id="2.40.290.30:FF:000001">
    <property type="entry name" value="Mediator of RNA polymerase II transcription subunit 25"/>
    <property type="match status" value="1"/>
</dbReference>
<dbReference type="Gene3D" id="2.40.290.30">
    <property type="entry name" value="Mediator complex subunit 25, ACID domain"/>
    <property type="match status" value="1"/>
</dbReference>
<dbReference type="InterPro" id="IPR021394">
    <property type="entry name" value="Med25_PTOV"/>
</dbReference>
<dbReference type="InterPro" id="IPR038196">
    <property type="entry name" value="Med25_PTOV_sf"/>
</dbReference>
<dbReference type="InterPro" id="IPR021397">
    <property type="entry name" value="Mediator_Med25_SD1"/>
</dbReference>
<dbReference type="InterPro" id="IPR021419">
    <property type="entry name" value="Mediator_Med25_VWA"/>
</dbReference>
<dbReference type="InterPro" id="IPR036465">
    <property type="entry name" value="vWFA_dom_sf"/>
</dbReference>
<dbReference type="PANTHER" id="PTHR12433">
    <property type="entry name" value="MEDIATOR OF RNA POLYMERASE II TRANSCRIPTION SUBUNIT 25"/>
    <property type="match status" value="1"/>
</dbReference>
<dbReference type="PANTHER" id="PTHR12433:SF10">
    <property type="entry name" value="MEDIATOR OF RNA POLYMERASE II TRANSCRIPTION SUBUNIT 25"/>
    <property type="match status" value="1"/>
</dbReference>
<dbReference type="Pfam" id="PF11232">
    <property type="entry name" value="Med25"/>
    <property type="match status" value="1"/>
</dbReference>
<dbReference type="Pfam" id="PF11235">
    <property type="entry name" value="Med25_SD1"/>
    <property type="match status" value="1"/>
</dbReference>
<dbReference type="Pfam" id="PF11265">
    <property type="entry name" value="Med25_VWA"/>
    <property type="match status" value="1"/>
</dbReference>
<dbReference type="SUPFAM" id="SSF53300">
    <property type="entry name" value="vWA-like"/>
    <property type="match status" value="1"/>
</dbReference>
<sequence length="747" mass="78171">MVPGSEGPARAGSVVADVVFVIEGTANLGPYFEGLRKHYLLPAIEYFNGGPPAETDFGGDYGGTQYSLVVFNTVDCAPESYVQCHAPTSSAYEFVTWLDGIKFMGGGGESCSLIAEGLSTALQLFDDFKKMREQIGQTHRVCLLICNSPPYLLPAVESTTYSGCTTENLVQQIGERGIHFSIVSPRKLPALRLLFEKAAPPALLEPLQPPTDVSQDPRHMVLVRGLVLPVGGGSAPGPLQSKQPVPLPPAAPSGATLSAAPQQPLPPVPPQYQVPGNLSAAQVAAQNAVEAAKNQKAGLGPRFSPITPLQQAAPGVGPPFSQAPAPQLPPGPPGAPKPPPASQPSLVSTVAPGSGLAPTAQPGAPSMAGTVAPGGVSGPSPAQLGAPALGGQQSVSNKLLAWSGVLEWQEKPKPASVDANTKLTRSLPCQVYVNHGENLKTEQWPQKLIMQLIPQQLLTTLGPLFRNSRMVQFHFTNKDLESLKGLYRIMGNGFAGCVHFPHTAPCEVRVLMLLYSSKKKIFMGLIPYDQSGFVNGIRQVITNHKQVQQQKLEQQQRGMGGQQAPPGLGPILEDQARPSQNLLQLRPPQPQPQGTVGASGATGQPQPQGTAQPPPGAPQGPPGAASGPPPPGPILRPQNPGANPQLRSLLLNPPPPQTGVPPPQASLHHLQPPGAPALLPPPHQGLGQPQLGPPLLHPPPAQSWPAQLPPRAPLPGQMLLSGGPRGPVPQPGLQPSVMEDDILMDLI</sequence>
<feature type="chain" id="PRO_0000304952" description="Mediator of RNA polymerase II transcription subunit 25">
    <location>
        <begin position="1"/>
        <end position="747"/>
    </location>
</feature>
<feature type="region of interest" description="Interaction with the Mediator complex">
    <location>
        <begin position="1"/>
        <end position="226"/>
    </location>
</feature>
<feature type="region of interest" description="Disordered" evidence="2">
    <location>
        <begin position="233"/>
        <end position="274"/>
    </location>
</feature>
<feature type="region of interest" description="Disordered" evidence="2">
    <location>
        <begin position="299"/>
        <end position="390"/>
    </location>
</feature>
<feature type="region of interest" description="Interaction with VP16">
    <location>
        <begin position="389"/>
        <end position="543"/>
    </location>
</feature>
<feature type="region of interest" description="Interaction with CREBBP" evidence="7">
    <location>
        <begin position="395"/>
        <end position="545"/>
    </location>
</feature>
<feature type="region of interest" description="Disordered" evidence="2">
    <location>
        <begin position="548"/>
        <end position="747"/>
    </location>
</feature>
<feature type="region of interest" description="Interaction with RARA" evidence="7">
    <location>
        <begin position="564"/>
        <end position="653"/>
    </location>
</feature>
<feature type="region of interest" description="Interaction with RARA" evidence="7">
    <location>
        <begin position="640"/>
        <end position="707"/>
    </location>
</feature>
<feature type="short sequence motif" description="LXXLL motif">
    <location>
        <begin position="646"/>
        <end position="650"/>
    </location>
</feature>
<feature type="compositionally biased region" description="Pro residues" evidence="2">
    <location>
        <begin position="263"/>
        <end position="272"/>
    </location>
</feature>
<feature type="compositionally biased region" description="Pro residues" evidence="2">
    <location>
        <begin position="326"/>
        <end position="342"/>
    </location>
</feature>
<feature type="compositionally biased region" description="Low complexity" evidence="2">
    <location>
        <begin position="598"/>
        <end position="611"/>
    </location>
</feature>
<feature type="compositionally biased region" description="Pro residues" evidence="2">
    <location>
        <begin position="612"/>
        <end position="634"/>
    </location>
</feature>
<feature type="compositionally biased region" description="Pro residues" evidence="2">
    <location>
        <begin position="652"/>
        <end position="664"/>
    </location>
</feature>
<feature type="compositionally biased region" description="Pro residues" evidence="2">
    <location>
        <begin position="673"/>
        <end position="683"/>
    </location>
</feature>
<feature type="compositionally biased region" description="Pro residues" evidence="2">
    <location>
        <begin position="691"/>
        <end position="713"/>
    </location>
</feature>
<feature type="compositionally biased region" description="Acidic residues" evidence="2">
    <location>
        <begin position="738"/>
        <end position="747"/>
    </location>
</feature>
<feature type="modified residue" description="Asymmetric dimethylarginine" evidence="1">
    <location>
        <position position="725"/>
    </location>
</feature>
<feature type="splice variant" id="VSP_047570" description="In isoform 6." evidence="13">
    <location>
        <begin position="61"/>
        <end position="273"/>
    </location>
</feature>
<feature type="splice variant" id="VSP_028143" description="In isoform 5." evidence="11">
    <location>
        <begin position="303"/>
        <end position="319"/>
    </location>
</feature>
<feature type="splice variant" id="VSP_028146" description="In isoform 4." evidence="12">
    <original>GQMLLSGGPRGPVPQPGLQPSVMEDDILMDLI</original>
    <variation>AAKRKREGEGRVFREKWERAYFFVEVKSMPMCLICKQIVSVLKEYNLKRHYESKHSKSYDQYTEQTRRIRARPIWPDP</variation>
    <location>
        <begin position="716"/>
        <end position="747"/>
    </location>
</feature>
<feature type="sequence variant" id="VAR_073949" description="In BVSYS; the mutation impairs interaction with the Mediator complex; dbSNP:rs794729668." evidence="10">
    <original>Y</original>
    <variation>C</variation>
    <location>
        <position position="39"/>
    </location>
</feature>
<feature type="sequence variant" id="VAR_073950" description="Found in a patient with syndromic intellectual disability; uncertain significance; dbSNP:rs781140315." evidence="9">
    <original>R</original>
    <variation>W</variation>
    <location>
        <position position="140"/>
    </location>
</feature>
<feature type="sequence variant" id="VAR_063521" description="In CMT2B2; dbSNP:rs145770066." evidence="8">
    <original>A</original>
    <variation>V</variation>
    <location>
        <position position="335"/>
    </location>
</feature>
<feature type="mutagenesis site" description="Abrogates interaction with RARA." evidence="7">
    <original>L</original>
    <variation>A</variation>
    <location>
        <position position="646"/>
    </location>
</feature>
<feature type="mutagenesis site" description="Abrogates interaction with RARA." evidence="7">
    <original>LL</original>
    <variation>AA</variation>
    <location>
        <begin position="649"/>
        <end position="650"/>
    </location>
</feature>
<feature type="sequence conflict" description="In Ref. 1; AAM20739." evidence="14" ref="1">
    <original>F</original>
    <variation>S</variation>
    <location>
        <position position="20"/>
    </location>
</feature>
<feature type="sequence conflict" description="In Ref. 2; CAE84581 and 4; CAB66680." evidence="14" ref="2 4">
    <original>P</original>
    <variation>L</variation>
    <location>
        <position position="236"/>
    </location>
</feature>
<feature type="sequence conflict" description="In Ref. 1; AAM20739." evidence="14" ref="1">
    <original>V</original>
    <variation>I</variation>
    <location>
        <position position="268"/>
    </location>
</feature>
<feature type="sequence conflict" description="In Ref. 3; AAS45401." evidence="14" ref="3">
    <original>L</original>
    <variation>M</variation>
    <location>
        <position position="514"/>
    </location>
</feature>
<feature type="sequence conflict" description="In Ref. 3; AAS45401." evidence="14" ref="3">
    <original>G</original>
    <variation>D</variation>
    <location>
        <position position="536"/>
    </location>
</feature>
<feature type="sequence conflict" description="In Ref. 1; AAM20739." evidence="14" ref="1">
    <original>S</original>
    <variation>F</variation>
    <location>
        <position position="703"/>
    </location>
</feature>
<feature type="strand" evidence="18">
    <location>
        <begin position="16"/>
        <end position="23"/>
    </location>
</feature>
<feature type="turn" evidence="18">
    <location>
        <begin position="27"/>
        <end position="31"/>
    </location>
</feature>
<feature type="helix" evidence="18">
    <location>
        <begin position="32"/>
        <end position="38"/>
    </location>
</feature>
<feature type="helix" evidence="18">
    <location>
        <begin position="40"/>
        <end position="47"/>
    </location>
</feature>
<feature type="strand" evidence="18">
    <location>
        <begin position="48"/>
        <end position="50"/>
    </location>
</feature>
<feature type="strand" evidence="18">
    <location>
        <begin position="61"/>
        <end position="63"/>
    </location>
</feature>
<feature type="strand" evidence="18">
    <location>
        <begin position="65"/>
        <end position="71"/>
    </location>
</feature>
<feature type="helix" evidence="18">
    <location>
        <begin position="91"/>
        <end position="100"/>
    </location>
</feature>
<feature type="helix" evidence="18">
    <location>
        <begin position="114"/>
        <end position="131"/>
    </location>
</feature>
<feature type="strand" evidence="18">
    <location>
        <begin position="134"/>
        <end position="136"/>
    </location>
</feature>
<feature type="strand" evidence="18">
    <location>
        <begin position="139"/>
        <end position="145"/>
    </location>
</feature>
<feature type="strand" evidence="18">
    <location>
        <begin position="159"/>
        <end position="161"/>
    </location>
</feature>
<feature type="helix" evidence="18">
    <location>
        <begin position="166"/>
        <end position="174"/>
    </location>
</feature>
<feature type="helix" evidence="18">
    <location>
        <begin position="175"/>
        <end position="177"/>
    </location>
</feature>
<feature type="strand" evidence="18">
    <location>
        <begin position="179"/>
        <end position="186"/>
    </location>
</feature>
<feature type="helix" evidence="18">
    <location>
        <begin position="189"/>
        <end position="197"/>
    </location>
</feature>
<feature type="strand" evidence="18">
    <location>
        <begin position="215"/>
        <end position="218"/>
    </location>
</feature>
<feature type="strand" evidence="18">
    <location>
        <begin position="220"/>
        <end position="226"/>
    </location>
</feature>
<feature type="strand" evidence="15">
    <location>
        <begin position="396"/>
        <end position="409"/>
    </location>
</feature>
<feature type="strand" evidence="15">
    <location>
        <begin position="414"/>
        <end position="417"/>
    </location>
</feature>
<feature type="strand" evidence="15">
    <location>
        <begin position="424"/>
        <end position="434"/>
    </location>
</feature>
<feature type="helix" evidence="15">
    <location>
        <begin position="441"/>
        <end position="443"/>
    </location>
</feature>
<feature type="strand" evidence="15">
    <location>
        <begin position="446"/>
        <end position="454"/>
    </location>
</feature>
<feature type="helix" evidence="15">
    <location>
        <begin position="455"/>
        <end position="461"/>
    </location>
</feature>
<feature type="helix" evidence="15">
    <location>
        <begin position="462"/>
        <end position="465"/>
    </location>
</feature>
<feature type="strand" evidence="15">
    <location>
        <begin position="466"/>
        <end position="475"/>
    </location>
</feature>
<feature type="strand" evidence="17">
    <location>
        <begin position="476"/>
        <end position="478"/>
    </location>
</feature>
<feature type="helix" evidence="15">
    <location>
        <begin position="480"/>
        <end position="493"/>
    </location>
</feature>
<feature type="strand" evidence="15">
    <location>
        <begin position="494"/>
        <end position="499"/>
    </location>
</feature>
<feature type="strand" evidence="16">
    <location>
        <begin position="502"/>
        <end position="504"/>
    </location>
</feature>
<feature type="strand" evidence="15">
    <location>
        <begin position="510"/>
        <end position="515"/>
    </location>
</feature>
<feature type="turn" evidence="15">
    <location>
        <begin position="517"/>
        <end position="519"/>
    </location>
</feature>
<feature type="strand" evidence="15">
    <location>
        <begin position="521"/>
        <end position="529"/>
    </location>
</feature>
<feature type="helix" evidence="15">
    <location>
        <begin position="530"/>
        <end position="545"/>
    </location>
</feature>
<organism>
    <name type="scientific">Homo sapiens</name>
    <name type="common">Human</name>
    <dbReference type="NCBI Taxonomy" id="9606"/>
    <lineage>
        <taxon>Eukaryota</taxon>
        <taxon>Metazoa</taxon>
        <taxon>Chordata</taxon>
        <taxon>Craniata</taxon>
        <taxon>Vertebrata</taxon>
        <taxon>Euteleostomi</taxon>
        <taxon>Mammalia</taxon>
        <taxon>Eutheria</taxon>
        <taxon>Euarchontoglires</taxon>
        <taxon>Primates</taxon>
        <taxon>Haplorrhini</taxon>
        <taxon>Catarrhini</taxon>
        <taxon>Hominidae</taxon>
        <taxon>Homo</taxon>
    </lineage>
</organism>
<comment type="function">
    <text evidence="3 4 7">Component of the Mediator complex, a coactivator involved in the regulated transcription of nearly all RNA polymerase II-dependent genes. Mediator functions as a bridge to convey information from gene-specific regulatory proteins to the basal RNA polymerase II transcription machinery. Mediator is recruited to promoters by direct interactions with regulatory proteins and serves as a scaffold for the assembly of a functional preinitiation complex with RNA polymerase II and the general transcription factors. Required for RARA/RXRA-mediated transcription.</text>
</comment>
<comment type="subunit">
    <text evidence="3 4 5 6 7">Component of the Mediator complex, which is composed of MED1, MED4, MED6, MED7, MED8, MED9, MED10, MED11, MED12, MED13, MED13L, MED14, MED15, MED16, MED17, MED18, MED19, MED20, MED21, MED22, MED23, MED24, MED25, MED26, MED27, MED29, MED30, MED31, CCNC, CDK8 and CDC2L6/CDK11. The MED12, MED13, CCNC and CDK8 subunits form a distinct module termed the CDK8 module. Mediator containing the CDK8 module is less active than Mediator lacking this module in supporting transcriptional activation. Individual preparations of the Mediator complex lacking one or more distinct subunits have been variously termed ARC, CRSP, DRIP, PC2, SMCC and TRAP. Interacts with CREBBP. Interacts with ESR1, GR, RARA, RXRA and THRB in a ligand-dependent fashion. Binds the Herpes simplex virus activator VP16.</text>
</comment>
<comment type="interaction">
    <interactant intactId="EBI-394558">
        <id>Q71SY5</id>
    </interactant>
    <interactant intactId="EBI-3867333">
        <id>A8MQ03</id>
        <label>CYSRT1</label>
    </interactant>
    <organismsDiffer>false</organismsDiffer>
    <experiments>3</experiments>
</comment>
<comment type="interaction">
    <interactant intactId="EBI-394558">
        <id>Q71SY5</id>
    </interactant>
    <interactant intactId="EBI-10213520">
        <id>Q6NXG1</id>
        <label>ESRP1</label>
    </interactant>
    <organismsDiffer>false</organismsDiffer>
    <experiments>3</experiments>
</comment>
<comment type="interaction">
    <interactant intactId="EBI-394558">
        <id>Q71SY5</id>
    </interactant>
    <interactant intactId="EBI-12807776">
        <id>O00167-2</id>
        <label>EYA2</label>
    </interactant>
    <organismsDiffer>false</organismsDiffer>
    <experiments>3</experiments>
</comment>
<comment type="interaction">
    <interactant intactId="EBI-394558">
        <id>Q71SY5</id>
    </interactant>
    <interactant intactId="EBI-12193763">
        <id>A1KXE4-2</id>
        <label>FAM168B</label>
    </interactant>
    <organismsDiffer>false</organismsDiffer>
    <experiments>3</experiments>
</comment>
<comment type="interaction">
    <interactant intactId="EBI-394558">
        <id>Q71SY5</id>
    </interactant>
    <interactant intactId="EBI-740220">
        <id>O14964</id>
        <label>HGS</label>
    </interactant>
    <organismsDiffer>false</organismsDiffer>
    <experiments>3</experiments>
</comment>
<comment type="interaction">
    <interactant intactId="EBI-394558">
        <id>Q71SY5</id>
    </interactant>
    <interactant intactId="EBI-740929">
        <id>Q53G59</id>
        <label>KLHL12</label>
    </interactant>
    <organismsDiffer>false</organismsDiffer>
    <experiments>3</experiments>
</comment>
<comment type="interaction">
    <interactant intactId="EBI-394558">
        <id>Q71SY5</id>
    </interactant>
    <interactant intactId="EBI-12111050">
        <id>Q3LI64</id>
        <label>KRTAP6-1</label>
    </interactant>
    <organismsDiffer>false</organismsDiffer>
    <experiments>3</experiments>
</comment>
<comment type="interaction">
    <interactant intactId="EBI-394558">
        <id>Q71SY5</id>
    </interactant>
    <interactant intactId="EBI-22311199">
        <id>Q3LI67</id>
        <label>KRTAP6-3</label>
    </interactant>
    <organismsDiffer>false</organismsDiffer>
    <experiments>3</experiments>
</comment>
<comment type="interaction">
    <interactant intactId="EBI-394558">
        <id>Q71SY5</id>
    </interactant>
    <interactant intactId="EBI-9088686">
        <id>Q14847-2</id>
        <label>LASP1</label>
    </interactant>
    <organismsDiffer>false</organismsDiffer>
    <experiments>3</experiments>
</comment>
<comment type="interaction">
    <interactant intactId="EBI-394558">
        <id>Q71SY5</id>
    </interactant>
    <interactant intactId="EBI-394489">
        <id>O60244</id>
        <label>MED14</label>
    </interactant>
    <organismsDiffer>false</organismsDiffer>
    <experiments>3</experiments>
</comment>
<comment type="interaction">
    <interactant intactId="EBI-394558">
        <id>Q71SY5</id>
    </interactant>
    <interactant intactId="EBI-394506">
        <id>Q96RN5</id>
        <label>MED15</label>
    </interactant>
    <organismsDiffer>false</organismsDiffer>
    <experiments>2</experiments>
</comment>
<comment type="interaction">
    <interactant intactId="EBI-394558">
        <id>Q71SY5</id>
    </interactant>
    <interactant intactId="EBI-394541">
        <id>Q9Y2X0</id>
        <label>MED16</label>
    </interactant>
    <organismsDiffer>false</organismsDiffer>
    <experiments>4</experiments>
</comment>
<comment type="interaction">
    <interactant intactId="EBI-394558">
        <id>Q71SY5</id>
    </interactant>
    <interactant intactId="EBI-311161">
        <id>Q9ULK4</id>
        <label>MED23</label>
    </interactant>
    <organismsDiffer>false</organismsDiffer>
    <experiments>5</experiments>
</comment>
<comment type="interaction">
    <interactant intactId="EBI-394558">
        <id>Q71SY5</id>
    </interactant>
    <interactant intactId="EBI-394523">
        <id>O75448</id>
        <label>MED24</label>
    </interactant>
    <organismsDiffer>false</organismsDiffer>
    <experiments>5</experiments>
</comment>
<comment type="interaction">
    <interactant intactId="EBI-394558">
        <id>Q71SY5</id>
    </interactant>
    <interactant intactId="EBI-10963850">
        <id>Q9NZQ3-3</id>
        <label>NCKIPSD</label>
    </interactant>
    <organismsDiffer>false</organismsDiffer>
    <experiments>3</experiments>
</comment>
<comment type="interaction">
    <interactant intactId="EBI-394558">
        <id>Q71SY5</id>
    </interactant>
    <interactant intactId="EBI-5774125">
        <id>A1E959</id>
        <label>ODAM</label>
    </interactant>
    <organismsDiffer>false</organismsDiffer>
    <experiments>3</experiments>
</comment>
<comment type="interaction">
    <interactant intactId="EBI-394558">
        <id>Q71SY5</id>
    </interactant>
    <interactant intactId="EBI-12813389">
        <id>Q8TDS5</id>
        <label>OXER1</label>
    </interactant>
    <organismsDiffer>false</organismsDiffer>
    <experiments>3</experiments>
</comment>
<comment type="interaction">
    <interactant intactId="EBI-394558">
        <id>Q71SY5</id>
    </interactant>
    <interactant intactId="EBI-724639">
        <id>Q9UBV8</id>
        <label>PEF1</label>
    </interactant>
    <organismsDiffer>false</organismsDiffer>
    <experiments>3</experiments>
</comment>
<comment type="interaction">
    <interactant intactId="EBI-394558">
        <id>Q71SY5</id>
    </interactant>
    <interactant intactId="EBI-373552">
        <id>Q96CS7</id>
        <label>PLEKHB2</label>
    </interactant>
    <organismsDiffer>false</organismsDiffer>
    <experiments>3</experiments>
</comment>
<comment type="interaction">
    <interactant intactId="EBI-394558">
        <id>Q71SY5</id>
    </interactant>
    <interactant intactId="EBI-413374">
        <id>P10276</id>
        <label>RARA</label>
    </interactant>
    <organismsDiffer>false</organismsDiffer>
    <experiments>10</experiments>
</comment>
<comment type="interaction">
    <interactant intactId="EBI-394558">
        <id>Q71SY5</id>
    </interactant>
    <interactant intactId="EBI-18560266">
        <id>Q92753-1</id>
        <label>RORB</label>
    </interactant>
    <organismsDiffer>false</organismsDiffer>
    <experiments>3</experiments>
</comment>
<comment type="interaction">
    <interactant intactId="EBI-394558">
        <id>Q71SY5</id>
    </interactant>
    <interactant intactId="EBI-6257312">
        <id>Q9BVN2</id>
        <label>RUSC1</label>
    </interactant>
    <organismsDiffer>false</organismsDiffer>
    <experiments>3</experiments>
</comment>
<comment type="interaction">
    <interactant intactId="EBI-394558">
        <id>Q71SY5</id>
    </interactant>
    <interactant intactId="EBI-78598">
        <id>P19793</id>
        <label>RXRA</label>
    </interactant>
    <organismsDiffer>false</organismsDiffer>
    <experiments>4</experiments>
</comment>
<comment type="interaction">
    <interactant intactId="EBI-394558">
        <id>Q71SY5</id>
    </interactant>
    <interactant intactId="EBI-748621">
        <id>Q9UJW9</id>
        <label>SERTAD3</label>
    </interactant>
    <organismsDiffer>false</organismsDiffer>
    <experiments>3</experiments>
</comment>
<comment type="interaction">
    <interactant intactId="EBI-394558">
        <id>Q71SY5</id>
    </interactant>
    <interactant intactId="EBI-1186119">
        <id>P51692</id>
        <label>STAT5B</label>
    </interactant>
    <organismsDiffer>false</organismsDiffer>
    <experiments>3</experiments>
</comment>
<comment type="interaction">
    <interactant intactId="EBI-394558">
        <id>Q71SY5</id>
    </interactant>
    <interactant intactId="EBI-357061">
        <id>Q92734</id>
        <label>TFG</label>
    </interactant>
    <organismsDiffer>false</organismsDiffer>
    <experiments>3</experiments>
</comment>
<comment type="interaction">
    <interactant intactId="EBI-394558">
        <id>Q71SY5</id>
    </interactant>
    <interactant intactId="EBI-11741437">
        <id>Q08117-2</id>
        <label>TLE5</label>
    </interactant>
    <organismsDiffer>false</organismsDiffer>
    <experiments>3</experiments>
</comment>
<comment type="interaction">
    <interactant intactId="EBI-394558">
        <id>Q71SY5</id>
    </interactant>
    <interactant intactId="EBI-11975223">
        <id>Q70EL1-9</id>
        <label>USP54</label>
    </interactant>
    <organismsDiffer>false</organismsDiffer>
    <experiments>3</experiments>
</comment>
<comment type="interaction">
    <interactant intactId="EBI-394558">
        <id>Q71SY5</id>
    </interactant>
    <interactant intactId="EBI-12040603">
        <id>Q9NZC7-5</id>
        <label>WWOX</label>
    </interactant>
    <organismsDiffer>false</organismsDiffer>
    <experiments>3</experiments>
</comment>
<comment type="interaction">
    <interactant intactId="EBI-394558">
        <id>Q71SY5</id>
    </interactant>
    <interactant intactId="EBI-743923">
        <id>O00308</id>
        <label>WWP2</label>
    </interactant>
    <organismsDiffer>false</organismsDiffer>
    <experiments>3</experiments>
</comment>
<comment type="interaction">
    <interactant intactId="EBI-394558">
        <id>Q71SY5</id>
    </interactant>
    <interactant intactId="EBI-346715">
        <id>P28700</id>
        <label>Rxra</label>
    </interactant>
    <organismsDiffer>true</organismsDiffer>
    <experiments>3</experiments>
</comment>
<comment type="interaction">
    <interactant intactId="EBI-394558">
        <id>Q71SY5</id>
    </interactant>
    <interactant intactId="EBI-15844956">
        <id>G8HBG2</id>
        <label>UL48</label>
    </interactant>
    <organismsDiffer>true</organismsDiffer>
    <experiments>5</experiments>
</comment>
<comment type="subcellular location">
    <subcellularLocation>
        <location evidence="3">Nucleus</location>
    </subcellularLocation>
</comment>
<comment type="alternative products">
    <event type="alternative splicing"/>
    <isoform>
        <id>Q71SY5-1</id>
        <name>1</name>
        <sequence type="displayed"/>
    </isoform>
    <isoform>
        <id>Q71SY5-4</id>
        <name>4</name>
        <sequence type="described" ref="VSP_028146"/>
    </isoform>
    <isoform>
        <id>Q71SY5-5</id>
        <name>5</name>
        <sequence type="described" ref="VSP_028143"/>
    </isoform>
    <isoform>
        <id>Q71SY5-6</id>
        <name>6</name>
        <sequence type="described" ref="VSP_047570"/>
    </isoform>
</comment>
<comment type="tissue specificity">
    <text evidence="3 4">Ubiquitously expressed. Highest levels in brain, heart, kidney, peripheral leukocytes, placenta, skeletal muscle and spleen.</text>
</comment>
<comment type="disease" evidence="8">
    <disease id="DI-02671">
        <name>Charcot-Marie-Tooth disease, axonal, type 2B2</name>
        <acronym>CMT2B2</acronym>
        <description>A recessive axonal form of Charcot-Marie-Tooth disease, a disorder of the peripheral nervous system, characterized by progressive weakness and atrophy, initially of the peroneal muscles and later of the distal muscles of the arms. Charcot-Marie-Tooth disease is classified in two main groups on the basis of electrophysiologic properties and histopathology: primary peripheral demyelinating neuropathies (designated CMT1 when they are dominantly inherited) and primary peripheral axonal neuropathies (CMT2). Neuropathies of the CMT2 group are characterized by signs of axonal degeneration in the absence of obvious myelin alterations, normal or slightly reduced nerve conduction velocities, and progressive distal muscle weakness and atrophy.</description>
        <dbReference type="MIM" id="605589"/>
    </disease>
    <text>The disease is caused by variants affecting the gene represented in this entry.</text>
</comment>
<comment type="disease" evidence="10">
    <disease id="DI-04474">
        <name>Basel-Vanagaite-Smirin-Yosef syndrome</name>
        <acronym>BVSYS</acronym>
        <description>An autosomal recessive syndrome characterized by eye, brain, cardiac and palatal abnormalities as well as growth retardation, microcephaly and severe intellectual disability.</description>
        <dbReference type="MIM" id="616449"/>
    </disease>
    <text>The disease is caused by variants affecting the gene represented in this entry.</text>
</comment>
<comment type="similarity">
    <text evidence="14">Belongs to the Mediator complex subunit 25 family.</text>
</comment>
<comment type="sequence caution" evidence="14">
    <conflict type="erroneous initiation">
        <sequence resource="EMBL-CDS" id="AAG15589"/>
    </conflict>
    <text>Truncated N-terminus.</text>
</comment>
<comment type="sequence caution" evidence="14">
    <conflict type="miscellaneous discrepancy">
        <sequence resource="EMBL-CDS" id="AAS45401"/>
    </conflict>
    <text>Contaminating sequence. Sequence of unknown origin in the C-terminal part.</text>
</comment>
<comment type="sequence caution" evidence="14">
    <conflict type="frameshift">
        <sequence resource="EMBL-CDS" id="CAB66680"/>
    </conflict>
</comment>
<comment type="sequence caution" evidence="14">
    <conflict type="miscellaneous discrepancy">
        <sequence resource="EMBL-CDS" id="CAB66680"/>
    </conflict>
    <text>Non-canonical splice intron-exon junction.</text>
</comment>
<comment type="sequence caution" evidence="14">
    <conflict type="miscellaneous discrepancy">
        <sequence resource="EMBL-CDS" id="CAE84581"/>
    </conflict>
    <text>Non-canonical splice intron-exon junction.</text>
</comment>
<gene>
    <name type="primary">MED25</name>
    <name type="synonym">ACID1</name>
    <name type="synonym">ARC92</name>
    <name type="synonym">PTOV2</name>
    <name type="ORF">TCBAP0758</name>
</gene>
<keyword id="KW-0002">3D-structure</keyword>
<keyword id="KW-0010">Activator</keyword>
<keyword id="KW-0025">Alternative splicing</keyword>
<keyword id="KW-0144">Charcot-Marie-Tooth disease</keyword>
<keyword id="KW-0903">Direct protein sequencing</keyword>
<keyword id="KW-0225">Disease variant</keyword>
<keyword id="KW-0991">Intellectual disability</keyword>
<keyword id="KW-0488">Methylation</keyword>
<keyword id="KW-0523">Neurodegeneration</keyword>
<keyword id="KW-0622">Neuropathy</keyword>
<keyword id="KW-0539">Nucleus</keyword>
<keyword id="KW-1267">Proteomics identification</keyword>
<keyword id="KW-1185">Reference proteome</keyword>
<keyword id="KW-0804">Transcription</keyword>
<keyword id="KW-0805">Transcription regulation</keyword>
<reference key="1">
    <citation type="journal article" date="2002" name="Biochem. Biophys. Res. Commun.">
        <title>A prostate-derived cDNA that is mapped to human chromosome 19 encodes a novel protein.</title>
        <authorList>
            <person name="Wang C."/>
            <person name="McCarty I.M."/>
            <person name="Balazs L."/>
            <person name="Li Y."/>
            <person name="Steiner M.S."/>
        </authorList>
    </citation>
    <scope>NUCLEOTIDE SEQUENCE [MRNA] (ISOFORM 1)</scope>
</reference>
<reference key="2">
    <citation type="journal article" date="2003" name="EMBO J.">
        <title>A novel docking site on Mediator is critical for activation by VP16 in mammalian cells.</title>
        <authorList>
            <person name="Mittler G."/>
            <person name="Stuehler T."/>
            <person name="Santolin L."/>
            <person name="Uhlmann T."/>
            <person name="Kremmer E."/>
            <person name="Lottspeich F."/>
            <person name="Berti L."/>
            <person name="Meisterernst M."/>
        </authorList>
    </citation>
    <scope>NUCLEOTIDE SEQUENCE [MRNA]</scope>
    <scope>PARTIAL PROTEIN SEQUENCE</scope>
    <scope>FUNCTION</scope>
    <scope>IDENTIFICATION IN THE MEDIATOR COMPLEX</scope>
    <scope>INTERACTION WITH VP16</scope>
    <scope>ASSOCIATION WITH PROMOTER REGIONS</scope>
    <scope>SUBCELLULAR LOCATION</scope>
    <scope>TISSUE SPECIFICITY</scope>
    <source>
        <tissue>Testis</tissue>
    </source>
</reference>
<reference key="3">
    <citation type="journal article" date="2004" name="Proc. Natl. Acad. Sci. U.S.A.">
        <title>The activator-recruited cofactor/Mediator coactivator subunit ARC92 is a functionally important target of the VP16 transcriptional activator.</title>
        <authorList>
            <person name="Yang F."/>
            <person name="DeBeaumont R."/>
            <person name="Zhou S."/>
            <person name="Naeaer A.M."/>
        </authorList>
    </citation>
    <scope>NUCLEOTIDE SEQUENCE [MRNA]</scope>
    <scope>PROTEIN SEQUENCE OF 1-11; 197-207; 241-254; 398-446 AND 520-530</scope>
    <scope>FUNCTION</scope>
    <scope>IDENTIFICATION IN THE MEDIATOR COMPLEX</scope>
    <scope>INTERACTION WITH VP16</scope>
    <scope>TISSUE SPECIFICITY</scope>
</reference>
<reference key="4">
    <citation type="submission" date="2008-01" db="EMBL/GenBank/DDBJ databases">
        <title>Alternative splicing as a prevalent mechanism in regulating mammalian mediator tail subcomplex activity.</title>
        <authorList>
            <person name="Kivil A."/>
            <person name="Kazantseva A."/>
            <person name="Vinkel K.J.M."/>
            <person name="Sadam H."/>
            <person name="Neuman T."/>
            <person name="Palm K."/>
        </authorList>
    </citation>
    <scope>NUCLEOTIDE SEQUENCE [MRNA] (ISOFORM 6)</scope>
    <scope>ALTERNATIVE SPLICING</scope>
</reference>
<reference key="5">
    <citation type="journal article" date="2001" name="Genome Res.">
        <title>Towards a catalog of human genes and proteins: sequencing and analysis of 500 novel complete protein coding human cDNAs.</title>
        <authorList>
            <person name="Wiemann S."/>
            <person name="Weil B."/>
            <person name="Wellenreuther R."/>
            <person name="Gassenhuber J."/>
            <person name="Glassl S."/>
            <person name="Ansorge W."/>
            <person name="Boecher M."/>
            <person name="Bloecker H."/>
            <person name="Bauersachs S."/>
            <person name="Blum H."/>
            <person name="Lauber J."/>
            <person name="Duesterhoeft A."/>
            <person name="Beyer A."/>
            <person name="Koehrer K."/>
            <person name="Strack N."/>
            <person name="Mewes H.-W."/>
            <person name="Ottenwaelder B."/>
            <person name="Obermaier B."/>
            <person name="Tampe J."/>
            <person name="Heubner D."/>
            <person name="Wambutt R."/>
            <person name="Korn B."/>
            <person name="Klein M."/>
            <person name="Poustka A."/>
        </authorList>
    </citation>
    <scope>NUCLEOTIDE SEQUENCE [LARGE SCALE MRNA]</scope>
    <source>
        <tissue>Testis</tissue>
    </source>
</reference>
<reference key="6">
    <citation type="journal article" date="2004" name="Nat. Genet.">
        <title>Complete sequencing and characterization of 21,243 full-length human cDNAs.</title>
        <authorList>
            <person name="Ota T."/>
            <person name="Suzuki Y."/>
            <person name="Nishikawa T."/>
            <person name="Otsuki T."/>
            <person name="Sugiyama T."/>
            <person name="Irie R."/>
            <person name="Wakamatsu A."/>
            <person name="Hayashi K."/>
            <person name="Sato H."/>
            <person name="Nagai K."/>
            <person name="Kimura K."/>
            <person name="Makita H."/>
            <person name="Sekine M."/>
            <person name="Obayashi M."/>
            <person name="Nishi T."/>
            <person name="Shibahara T."/>
            <person name="Tanaka T."/>
            <person name="Ishii S."/>
            <person name="Yamamoto J."/>
            <person name="Saito K."/>
            <person name="Kawai Y."/>
            <person name="Isono Y."/>
            <person name="Nakamura Y."/>
            <person name="Nagahari K."/>
            <person name="Murakami K."/>
            <person name="Yasuda T."/>
            <person name="Iwayanagi T."/>
            <person name="Wagatsuma M."/>
            <person name="Shiratori A."/>
            <person name="Sudo H."/>
            <person name="Hosoiri T."/>
            <person name="Kaku Y."/>
            <person name="Kodaira H."/>
            <person name="Kondo H."/>
            <person name="Sugawara M."/>
            <person name="Takahashi M."/>
            <person name="Kanda K."/>
            <person name="Yokoi T."/>
            <person name="Furuya T."/>
            <person name="Kikkawa E."/>
            <person name="Omura Y."/>
            <person name="Abe K."/>
            <person name="Kamihara K."/>
            <person name="Katsuta N."/>
            <person name="Sato K."/>
            <person name="Tanikawa M."/>
            <person name="Yamazaki M."/>
            <person name="Ninomiya K."/>
            <person name="Ishibashi T."/>
            <person name="Yamashita H."/>
            <person name="Murakawa K."/>
            <person name="Fujimori K."/>
            <person name="Tanai H."/>
            <person name="Kimata M."/>
            <person name="Watanabe M."/>
            <person name="Hiraoka S."/>
            <person name="Chiba Y."/>
            <person name="Ishida S."/>
            <person name="Ono Y."/>
            <person name="Takiguchi S."/>
            <person name="Watanabe S."/>
            <person name="Yosida M."/>
            <person name="Hotuta T."/>
            <person name="Kusano J."/>
            <person name="Kanehori K."/>
            <person name="Takahashi-Fujii A."/>
            <person name="Hara H."/>
            <person name="Tanase T.-O."/>
            <person name="Nomura Y."/>
            <person name="Togiya S."/>
            <person name="Komai F."/>
            <person name="Hara R."/>
            <person name="Takeuchi K."/>
            <person name="Arita M."/>
            <person name="Imose N."/>
            <person name="Musashino K."/>
            <person name="Yuuki H."/>
            <person name="Oshima A."/>
            <person name="Sasaki N."/>
            <person name="Aotsuka S."/>
            <person name="Yoshikawa Y."/>
            <person name="Matsunawa H."/>
            <person name="Ichihara T."/>
            <person name="Shiohata N."/>
            <person name="Sano S."/>
            <person name="Moriya S."/>
            <person name="Momiyama H."/>
            <person name="Satoh N."/>
            <person name="Takami S."/>
            <person name="Terashima Y."/>
            <person name="Suzuki O."/>
            <person name="Nakagawa S."/>
            <person name="Senoh A."/>
            <person name="Mizoguchi H."/>
            <person name="Goto Y."/>
            <person name="Shimizu F."/>
            <person name="Wakebe H."/>
            <person name="Hishigaki H."/>
            <person name="Watanabe T."/>
            <person name="Sugiyama A."/>
            <person name="Takemoto M."/>
            <person name="Kawakami B."/>
            <person name="Yamazaki M."/>
            <person name="Watanabe K."/>
            <person name="Kumagai A."/>
            <person name="Itakura S."/>
            <person name="Fukuzumi Y."/>
            <person name="Fujimori Y."/>
            <person name="Komiyama M."/>
            <person name="Tashiro H."/>
            <person name="Tanigami A."/>
            <person name="Fujiwara T."/>
            <person name="Ono T."/>
            <person name="Yamada K."/>
            <person name="Fujii Y."/>
            <person name="Ozaki K."/>
            <person name="Hirao M."/>
            <person name="Ohmori Y."/>
            <person name="Kawabata A."/>
            <person name="Hikiji T."/>
            <person name="Kobatake N."/>
            <person name="Inagaki H."/>
            <person name="Ikema Y."/>
            <person name="Okamoto S."/>
            <person name="Okitani R."/>
            <person name="Kawakami T."/>
            <person name="Noguchi S."/>
            <person name="Itoh T."/>
            <person name="Shigeta K."/>
            <person name="Senba T."/>
            <person name="Matsumura K."/>
            <person name="Nakajima Y."/>
            <person name="Mizuno T."/>
            <person name="Morinaga M."/>
            <person name="Sasaki M."/>
            <person name="Togashi T."/>
            <person name="Oyama M."/>
            <person name="Hata H."/>
            <person name="Watanabe M."/>
            <person name="Komatsu T."/>
            <person name="Mizushima-Sugano J."/>
            <person name="Satoh T."/>
            <person name="Shirai Y."/>
            <person name="Takahashi Y."/>
            <person name="Nakagawa K."/>
            <person name="Okumura K."/>
            <person name="Nagase T."/>
            <person name="Nomura N."/>
            <person name="Kikuchi H."/>
            <person name="Masuho Y."/>
            <person name="Yamashita R."/>
            <person name="Nakai K."/>
            <person name="Yada T."/>
            <person name="Nakamura Y."/>
            <person name="Ohara O."/>
            <person name="Isogai T."/>
            <person name="Sugano S."/>
        </authorList>
    </citation>
    <scope>NUCLEOTIDE SEQUENCE [LARGE SCALE MRNA] (ISOFORM 1)</scope>
</reference>
<reference key="7">
    <citation type="journal article" date="2004" name="Nature">
        <title>The DNA sequence and biology of human chromosome 19.</title>
        <authorList>
            <person name="Grimwood J."/>
            <person name="Gordon L.A."/>
            <person name="Olsen A.S."/>
            <person name="Terry A."/>
            <person name="Schmutz J."/>
            <person name="Lamerdin J.E."/>
            <person name="Hellsten U."/>
            <person name="Goodstein D."/>
            <person name="Couronne O."/>
            <person name="Tran-Gyamfi M."/>
            <person name="Aerts A."/>
            <person name="Altherr M."/>
            <person name="Ashworth L."/>
            <person name="Bajorek E."/>
            <person name="Black S."/>
            <person name="Branscomb E."/>
            <person name="Caenepeel S."/>
            <person name="Carrano A.V."/>
            <person name="Caoile C."/>
            <person name="Chan Y.M."/>
            <person name="Christensen M."/>
            <person name="Cleland C.A."/>
            <person name="Copeland A."/>
            <person name="Dalin E."/>
            <person name="Dehal P."/>
            <person name="Denys M."/>
            <person name="Detter J.C."/>
            <person name="Escobar J."/>
            <person name="Flowers D."/>
            <person name="Fotopulos D."/>
            <person name="Garcia C."/>
            <person name="Georgescu A.M."/>
            <person name="Glavina T."/>
            <person name="Gomez M."/>
            <person name="Gonzales E."/>
            <person name="Groza M."/>
            <person name="Hammon N."/>
            <person name="Hawkins T."/>
            <person name="Haydu L."/>
            <person name="Ho I."/>
            <person name="Huang W."/>
            <person name="Israni S."/>
            <person name="Jett J."/>
            <person name="Kadner K."/>
            <person name="Kimball H."/>
            <person name="Kobayashi A."/>
            <person name="Larionov V."/>
            <person name="Leem S.-H."/>
            <person name="Lopez F."/>
            <person name="Lou Y."/>
            <person name="Lowry S."/>
            <person name="Malfatti S."/>
            <person name="Martinez D."/>
            <person name="McCready P.M."/>
            <person name="Medina C."/>
            <person name="Morgan J."/>
            <person name="Nelson K."/>
            <person name="Nolan M."/>
            <person name="Ovcharenko I."/>
            <person name="Pitluck S."/>
            <person name="Pollard M."/>
            <person name="Popkie A.P."/>
            <person name="Predki P."/>
            <person name="Quan G."/>
            <person name="Ramirez L."/>
            <person name="Rash S."/>
            <person name="Retterer J."/>
            <person name="Rodriguez A."/>
            <person name="Rogers S."/>
            <person name="Salamov A."/>
            <person name="Salazar A."/>
            <person name="She X."/>
            <person name="Smith D."/>
            <person name="Slezak T."/>
            <person name="Solovyev V."/>
            <person name="Thayer N."/>
            <person name="Tice H."/>
            <person name="Tsai M."/>
            <person name="Ustaszewska A."/>
            <person name="Vo N."/>
            <person name="Wagner M."/>
            <person name="Wheeler J."/>
            <person name="Wu K."/>
            <person name="Xie G."/>
            <person name="Yang J."/>
            <person name="Dubchak I."/>
            <person name="Furey T.S."/>
            <person name="DeJong P."/>
            <person name="Dickson M."/>
            <person name="Gordon D."/>
            <person name="Eichler E.E."/>
            <person name="Pennacchio L.A."/>
            <person name="Richardson P."/>
            <person name="Stubbs L."/>
            <person name="Rokhsar D.S."/>
            <person name="Myers R.M."/>
            <person name="Rubin E.M."/>
            <person name="Lucas S.M."/>
        </authorList>
    </citation>
    <scope>NUCLEOTIDE SEQUENCE [LARGE SCALE GENOMIC DNA]</scope>
</reference>
<reference key="8">
    <citation type="submission" date="2005-07" db="EMBL/GenBank/DDBJ databases">
        <authorList>
            <person name="Mural R.J."/>
            <person name="Istrail S."/>
            <person name="Sutton G.G."/>
            <person name="Florea L."/>
            <person name="Halpern A.L."/>
            <person name="Mobarry C.M."/>
            <person name="Lippert R."/>
            <person name="Walenz B."/>
            <person name="Shatkay H."/>
            <person name="Dew I."/>
            <person name="Miller J.R."/>
            <person name="Flanigan M.J."/>
            <person name="Edwards N.J."/>
            <person name="Bolanos R."/>
            <person name="Fasulo D."/>
            <person name="Halldorsson B.V."/>
            <person name="Hannenhalli S."/>
            <person name="Turner R."/>
            <person name="Yooseph S."/>
            <person name="Lu F."/>
            <person name="Nusskern D.R."/>
            <person name="Shue B.C."/>
            <person name="Zheng X.H."/>
            <person name="Zhong F."/>
            <person name="Delcher A.L."/>
            <person name="Huson D.H."/>
            <person name="Kravitz S.A."/>
            <person name="Mouchard L."/>
            <person name="Reinert K."/>
            <person name="Remington K.A."/>
            <person name="Clark A.G."/>
            <person name="Waterman M.S."/>
            <person name="Eichler E.E."/>
            <person name="Adams M.D."/>
            <person name="Hunkapiller M.W."/>
            <person name="Myers E.W."/>
            <person name="Venter J.C."/>
        </authorList>
    </citation>
    <scope>NUCLEOTIDE SEQUENCE [LARGE SCALE GENOMIC DNA]</scope>
</reference>
<reference key="9">
    <citation type="journal article" date="2004" name="Genome Res.">
        <title>The status, quality, and expansion of the NIH full-length cDNA project: the Mammalian Gene Collection (MGC).</title>
        <authorList>
            <consortium name="The MGC Project Team"/>
        </authorList>
    </citation>
    <scope>NUCLEOTIDE SEQUENCE [LARGE SCALE MRNA] (ISOFORM 1)</scope>
    <scope>NUCLEOTIDE SEQUENCE [LARGE SCALE MRNA] OF 159-747 (ISOFORM 5)</scope>
    <source>
        <tissue>Eye</tissue>
        <tissue>Lung</tissue>
    </source>
</reference>
<reference key="10">
    <citation type="submission" date="2000-09" db="EMBL/GenBank/DDBJ databases">
        <title>Pediatric leukemia cDNA sequencing project.</title>
        <authorList>
            <person name="Villalon D.K."/>
            <person name="Luna R.A."/>
            <person name="Margolin J.K."/>
            <person name="Tsang Y.T.M."/>
            <person name="Hale S.M."/>
            <person name="Mei G."/>
            <person name="Bouck J."/>
            <person name="Gibbs R.A."/>
        </authorList>
    </citation>
    <scope>NUCLEOTIDE SEQUENCE [LARGE SCALE MRNA] OF 180-747 (ISOFORM 4)</scope>
    <source>
        <tissue>Leukocyte</tissue>
    </source>
</reference>
<reference key="11">
    <citation type="journal article" date="2004" name="Mol. Cell">
        <title>A set of consensus mammalian mediator subunits identified by multidimensional protein identification technology.</title>
        <authorList>
            <person name="Sato S."/>
            <person name="Tomomori-Sato C."/>
            <person name="Parmely T.J."/>
            <person name="Florens L."/>
            <person name="Zybailov B."/>
            <person name="Swanson S.K."/>
            <person name="Banks C.A.S."/>
            <person name="Jin J."/>
            <person name="Cai Y."/>
            <person name="Washburn M.P."/>
            <person name="Conaway J.W."/>
            <person name="Conaway R.C."/>
        </authorList>
    </citation>
    <scope>IDENTIFICATION BY MASS SPECTROMETRY</scope>
    <scope>IDENTIFICATION IN THE MEDIATOR COMPLEX</scope>
</reference>
<reference key="12">
    <citation type="journal article" date="2005" name="Mol. Cell">
        <title>MED1/TRAP220 exists predominantly in a TRAP/Mediator subpopulation enriched in RNA polymerase II and is required for ER-mediated transcription.</title>
        <authorList>
            <person name="Zhang X."/>
            <person name="Krutchinsky A."/>
            <person name="Fukuda A."/>
            <person name="Chen W."/>
            <person name="Yamamura S."/>
            <person name="Chait B.T."/>
            <person name="Roeder R.G."/>
        </authorList>
    </citation>
    <scope>IDENTIFICATION BY MASS SPECTROMETRY</scope>
    <scope>IDENTIFICATION IN THE MEDIATOR COMPLEX</scope>
    <scope>ASSOCIATION OF THE MEDIATOR COMPLEX WITH RNA POLYMERASE II</scope>
</reference>
<reference key="13">
    <citation type="journal article" date="2007" name="EMBO J.">
        <title>MED25 is distinct from TRAP220/MED1 in cooperating with CBP for retinoid receptor activation.</title>
        <authorList>
            <person name="Lee H.-K."/>
            <person name="Park U.-H."/>
            <person name="Kim E.-J."/>
            <person name="Um S.-J."/>
        </authorList>
    </citation>
    <scope>FUNCTION</scope>
    <scope>ASSOCIATION WITH PROMOTER REGIONS</scope>
    <scope>INTERACTION WITH CREBBP; ESR1; GR; MED1; MED6; RARA; RXRA AND THRB</scope>
    <scope>MUTAGENESIS OF LEU-646 AND 649-LEU-LEU-650</scope>
</reference>
<reference key="14">
    <citation type="journal article" date="2012" name="Proc. Natl. Acad. Sci. U.S.A.">
        <title>N-terminal acetylome analyses and functional insights of the N-terminal acetyltransferase NatB.</title>
        <authorList>
            <person name="Van Damme P."/>
            <person name="Lasa M."/>
            <person name="Polevoda B."/>
            <person name="Gazquez C."/>
            <person name="Elosegui-Artola A."/>
            <person name="Kim D.S."/>
            <person name="De Juan-Pardo E."/>
            <person name="Demeyer K."/>
            <person name="Hole K."/>
            <person name="Larrea E."/>
            <person name="Timmerman E."/>
            <person name="Prieto J."/>
            <person name="Arnesen T."/>
            <person name="Sherman F."/>
            <person name="Gevaert K."/>
            <person name="Aldabe R."/>
        </authorList>
    </citation>
    <scope>IDENTIFICATION BY MASS SPECTROMETRY [LARGE SCALE ANALYSIS]</scope>
</reference>
<reference key="15">
    <citation type="journal article" date="2011" name="J. Struct. Biol.">
        <title>NMR structure of the human Mediator MED25 ACID domain.</title>
        <authorList>
            <person name="Bontems F."/>
            <person name="Verger A."/>
            <person name="Dewitte F."/>
            <person name="Lens Z."/>
            <person name="Baert J.L."/>
            <person name="Ferreira E."/>
            <person name="Launoit Y.D."/>
            <person name="Sizun C."/>
            <person name="Guittet E."/>
            <person name="Villeret V."/>
            <person name="Monte D."/>
        </authorList>
    </citation>
    <scope>STRUCTURE BY NMR OF 391-548</scope>
</reference>
<reference key="16">
    <citation type="journal article" date="2009" name="Neurogenetics">
        <title>Identification of the variant Ala335Val of MED25 as responsible for CMT2B2: molecular data, functional studies of the SH3 recognition motif and correlation between wild-type MED25 and PMP22 RNA levels in CMT1A animal models.</title>
        <authorList>
            <person name="Leal A."/>
            <person name="Huehne K."/>
            <person name="Bauer F."/>
            <person name="Sticht H."/>
            <person name="Berger P."/>
            <person name="Suter U."/>
            <person name="Morera B."/>
            <person name="Del Valle G."/>
            <person name="Lupski J.R."/>
            <person name="Ekici A."/>
            <person name="Pasutto F."/>
            <person name="Endele S."/>
            <person name="Barrantes R."/>
            <person name="Berghoff C."/>
            <person name="Berghoff M."/>
            <person name="Neundoerfer B."/>
            <person name="Heuss D."/>
            <person name="Dorn T."/>
            <person name="Young P."/>
            <person name="Santolin L."/>
            <person name="Uhlmann T."/>
            <person name="Meisterernst M."/>
            <person name="Sereda M.W."/>
            <person name="Sereda M."/>
            <person name="Stassart R.M."/>
            <person name="Zu Horste G.M."/>
            <person name="Nave K.A."/>
            <person name="Reis A."/>
            <person name="Rautenstrauss B."/>
        </authorList>
    </citation>
    <scope>VARIANT CMT2B2 VAL-335</scope>
</reference>
<reference key="17">
    <citation type="journal article" date="2009" name="Neurogenetics">
        <authorList>
            <person name="Leal A."/>
            <person name="Huehne K."/>
            <person name="Bauer F."/>
            <person name="Sticht H."/>
            <person name="Berger P."/>
            <person name="Suter U."/>
            <person name="Morera B."/>
            <person name="Del Valle G."/>
            <person name="Lupski J.R."/>
            <person name="Ekici A."/>
            <person name="Pasutto F."/>
            <person name="Endele S."/>
            <person name="Barrantes R."/>
            <person name="Berghoff C."/>
            <person name="Berghoff M."/>
            <person name="Neundoerfer B."/>
            <person name="Heuss D."/>
            <person name="Dorn T."/>
            <person name="Young P."/>
            <person name="Santolin L."/>
            <person name="Uhlmann T."/>
            <person name="Meisterernst M."/>
            <person name="Sereda M.W."/>
            <person name="Sereda M."/>
            <person name="Stassart R.M."/>
            <person name="Zu Horste G.M."/>
            <person name="Nave K.A."/>
            <person name="Reis A."/>
            <person name="Rautenstrauss B."/>
        </authorList>
    </citation>
    <scope>ERRATUM OF PUBMED:19290556</scope>
</reference>
<reference key="18">
    <citation type="journal article" date="2015" name="Hum. Genet.">
        <title>Homozygous MED25 mutation implicated in eye-intellectual disability syndrome.</title>
        <authorList>
            <person name="Basel-Vanagaite L."/>
            <person name="Smirin-Yosef P."/>
            <person name="Essakow J.L."/>
            <person name="Tzur S."/>
            <person name="Lagovsky I."/>
            <person name="Maya I."/>
            <person name="Pasmanik-Chor M."/>
            <person name="Yeheskel A."/>
            <person name="Konen O."/>
            <person name="Orenstein N."/>
            <person name="Weisz Hubshman M."/>
            <person name="Drasinover V."/>
            <person name="Magal N."/>
            <person name="Peretz Amit G."/>
            <person name="Zalzstein Y."/>
            <person name="Zeharia A."/>
            <person name="Shohat M."/>
            <person name="Straussberg R."/>
            <person name="Monte D."/>
            <person name="Salmon-Divon M."/>
            <person name="Behar D.M."/>
        </authorList>
    </citation>
    <scope>INVOLVEMENT IN BVSYS</scope>
    <scope>VARIANT BVSYS CYS-39</scope>
    <scope>CHARACTERIZATION OF VARIANT BVSYS CYS-39</scope>
</reference>
<reference key="19">
    <citation type="journal article" date="2015" name="J. Med. Genet.">
        <title>Homozygous missense mutation in MED25 segregates with syndromic intellectual disability in a large consanguineous family.</title>
        <authorList>
            <person name="Figueiredo T."/>
            <person name="Melo U.S."/>
            <person name="Pessoa A.L."/>
            <person name="Nobrega P.R."/>
            <person name="Kitajima J.P."/>
            <person name="Correa I."/>
            <person name="Zatz M."/>
            <person name="Kok F."/>
            <person name="Santos S."/>
        </authorList>
    </citation>
    <scope>VARIANT TRP-140</scope>
</reference>
<evidence type="ECO:0000250" key="1">
    <source>
        <dbReference type="UniProtKB" id="Q8VCB2"/>
    </source>
</evidence>
<evidence type="ECO:0000256" key="2">
    <source>
        <dbReference type="SAM" id="MobiDB-lite"/>
    </source>
</evidence>
<evidence type="ECO:0000269" key="3">
    <source>
    </source>
</evidence>
<evidence type="ECO:0000269" key="4">
    <source>
    </source>
</evidence>
<evidence type="ECO:0000269" key="5">
    <source>
    </source>
</evidence>
<evidence type="ECO:0000269" key="6">
    <source>
    </source>
</evidence>
<evidence type="ECO:0000269" key="7">
    <source>
    </source>
</evidence>
<evidence type="ECO:0000269" key="8">
    <source>
    </source>
</evidence>
<evidence type="ECO:0000269" key="9">
    <source>
    </source>
</evidence>
<evidence type="ECO:0000269" key="10">
    <source>
    </source>
</evidence>
<evidence type="ECO:0000303" key="11">
    <source>
    </source>
</evidence>
<evidence type="ECO:0000303" key="12">
    <source ref="10"/>
</evidence>
<evidence type="ECO:0000303" key="13">
    <source ref="4"/>
</evidence>
<evidence type="ECO:0000305" key="14"/>
<evidence type="ECO:0007829" key="15">
    <source>
        <dbReference type="PDB" id="2KY6"/>
    </source>
</evidence>
<evidence type="ECO:0007829" key="16">
    <source>
        <dbReference type="PDB" id="2L23"/>
    </source>
</evidence>
<evidence type="ECO:0007829" key="17">
    <source>
        <dbReference type="PDB" id="2L6U"/>
    </source>
</evidence>
<evidence type="ECO:0007829" key="18">
    <source>
        <dbReference type="PDB" id="7EMF"/>
    </source>
</evidence>
<accession>Q71SY5</accession>
<accession>A8K095</accession>
<accession>B9TX30</accession>
<accession>O95783</accession>
<accession>Q6P143</accession>
<accession>Q6QMH5</accession>
<accession>Q707U4</accession>
<accession>Q8TB55</accession>
<accession>Q9H0L5</accession>
<accession>Q9HB34</accession>
<protein>
    <recommendedName>
        <fullName>Mediator of RNA polymerase II transcription subunit 25</fullName>
    </recommendedName>
    <alternativeName>
        <fullName>Activator interaction domain-containing protein 1</fullName>
    </alternativeName>
    <alternativeName>
        <fullName>Activator-recruited cofactor 92 kDa component</fullName>
        <shortName>ARC92</shortName>
    </alternativeName>
    <alternativeName>
        <fullName>Mediator complex subunit 25</fullName>
    </alternativeName>
    <alternativeName>
        <fullName>p78</fullName>
    </alternativeName>
</protein>
<proteinExistence type="evidence at protein level"/>
<name>MED25_HUMAN</name>